<sequence length="769" mass="87925">MPASWTSPQKSSALAPDDHGSSYEGSVSFRDVVINFSREEWQHLDLSQRNLYRDVMLETYSHLLSVGYQVPKPEVVMLEQGKEPWALQGERPRHSCPGEKLWDHNQHRKIIGYKPASSQDQKIYSGEKSYECAEFGKSFTWKSQFKVHLKVPTGEKLYVCIECGRAFVQKPEFITHQKAHMREKPYKCNECGKSVFQVSSLFRHQRIHTGEKLYQCSECGKGFPYNSDLSIHEKIHTGERHHECTDCGKAFTQRSTLKMHQKIHTGERSYICIECGQAFIQKTQLIAHRRIHSGEKPYECNNCGKSFISKSQLEVHQRIHTRLKPYICTEYGKVFSNNSNLITHEKVQSREKSSICTECGKAFTYRSELIIHQRIHTGEKPYACSDCGKAFTQKSTLTVHQRIHTGEKSYVCMKCGLAFIRKAHLVTHQIIHTGEKPYKCGHCGKLFTSKSQLHVHKRIHTGEKPYVCNKCGKAFTNRSDLITHQKTHTGEKSYICSKCGKAFTQRSDLITHQRIHTGEKPYECNTCGKAFTQKSNLNIHQKIHTGERQYECHECGKAFNQKSILIVHQKIHTGEKPYVCTECGRAFIRKSNFITHQRIHTGEKPYECSDCGKSFTSKSQLLVHQPLHTGEKPYVCAECGKAFSGRSNLSKHQKTHTGEKPYICSECGKTFRQKSELITHHRIHTGEKPYECSDCGKSFTKKSQLQVHQRIHTGEKPYVCAECGKAFSNRSNLNKHQTTHTGDKPYKCGICGKGFVQKSVFSVHQGSHA</sequence>
<feature type="chain" id="PRO_0000047680" description="Zinc finger protein 585B">
    <location>
        <begin position="1"/>
        <end position="769"/>
    </location>
</feature>
<feature type="domain" description="KRAB" evidence="2">
    <location>
        <begin position="27"/>
        <end position="97"/>
    </location>
</feature>
<feature type="zinc finger region" description="C2H2-type 1" evidence="1">
    <location>
        <begin position="158"/>
        <end position="180"/>
    </location>
</feature>
<feature type="zinc finger region" description="C2H2-type 2" evidence="1">
    <location>
        <begin position="186"/>
        <end position="208"/>
    </location>
</feature>
<feature type="zinc finger region" description="C2H2-type 3" evidence="1">
    <location>
        <begin position="214"/>
        <end position="236"/>
    </location>
</feature>
<feature type="zinc finger region" description="C2H2-type 4" evidence="1">
    <location>
        <begin position="242"/>
        <end position="264"/>
    </location>
</feature>
<feature type="zinc finger region" description="C2H2-type 5" evidence="1">
    <location>
        <begin position="270"/>
        <end position="292"/>
    </location>
</feature>
<feature type="zinc finger region" description="C2H2-type 6" evidence="1">
    <location>
        <begin position="298"/>
        <end position="320"/>
    </location>
</feature>
<feature type="zinc finger region" description="C2H2-type 7" evidence="1">
    <location>
        <begin position="354"/>
        <end position="376"/>
    </location>
</feature>
<feature type="zinc finger region" description="C2H2-type 8" evidence="1">
    <location>
        <begin position="382"/>
        <end position="404"/>
    </location>
</feature>
<feature type="zinc finger region" description="C2H2-type 9" evidence="1">
    <location>
        <begin position="410"/>
        <end position="432"/>
    </location>
</feature>
<feature type="zinc finger region" description="C2H2-type 10" evidence="1">
    <location>
        <begin position="438"/>
        <end position="460"/>
    </location>
</feature>
<feature type="zinc finger region" description="C2H2-type 11" evidence="1">
    <location>
        <begin position="466"/>
        <end position="488"/>
    </location>
</feature>
<feature type="zinc finger region" description="C2H2-type 12" evidence="1">
    <location>
        <begin position="494"/>
        <end position="516"/>
    </location>
</feature>
<feature type="zinc finger region" description="C2H2-type 13" evidence="1">
    <location>
        <begin position="522"/>
        <end position="544"/>
    </location>
</feature>
<feature type="zinc finger region" description="C2H2-type 14" evidence="1">
    <location>
        <begin position="550"/>
        <end position="572"/>
    </location>
</feature>
<feature type="zinc finger region" description="C2H2-type 15" evidence="1">
    <location>
        <begin position="578"/>
        <end position="600"/>
    </location>
</feature>
<feature type="zinc finger region" description="C2H2-type 16" evidence="1">
    <location>
        <begin position="606"/>
        <end position="628"/>
    </location>
</feature>
<feature type="zinc finger region" description="C2H2-type 17" evidence="1">
    <location>
        <begin position="634"/>
        <end position="656"/>
    </location>
</feature>
<feature type="zinc finger region" description="C2H2-type 18" evidence="1">
    <location>
        <begin position="662"/>
        <end position="684"/>
    </location>
</feature>
<feature type="zinc finger region" description="C2H2-type 19" evidence="1">
    <location>
        <begin position="690"/>
        <end position="712"/>
    </location>
</feature>
<feature type="zinc finger region" description="C2H2-type 20" evidence="1">
    <location>
        <begin position="718"/>
        <end position="740"/>
    </location>
</feature>
<feature type="zinc finger region" description="C2H2-type 21" evidence="1">
    <location>
        <begin position="746"/>
        <end position="768"/>
    </location>
</feature>
<feature type="region of interest" description="Disordered" evidence="3">
    <location>
        <begin position="1"/>
        <end position="23"/>
    </location>
</feature>
<feature type="compositionally biased region" description="Polar residues" evidence="3">
    <location>
        <begin position="1"/>
        <end position="12"/>
    </location>
</feature>
<accession>Q5RB30</accession>
<evidence type="ECO:0000255" key="1">
    <source>
        <dbReference type="PROSITE-ProRule" id="PRU00042"/>
    </source>
</evidence>
<evidence type="ECO:0000255" key="2">
    <source>
        <dbReference type="PROSITE-ProRule" id="PRU00119"/>
    </source>
</evidence>
<evidence type="ECO:0000256" key="3">
    <source>
        <dbReference type="SAM" id="MobiDB-lite"/>
    </source>
</evidence>
<evidence type="ECO:0000305" key="4"/>
<proteinExistence type="evidence at transcript level"/>
<keyword id="KW-0479">Metal-binding</keyword>
<keyword id="KW-0539">Nucleus</keyword>
<keyword id="KW-1185">Reference proteome</keyword>
<keyword id="KW-0677">Repeat</keyword>
<keyword id="KW-0804">Transcription</keyword>
<keyword id="KW-0805">Transcription regulation</keyword>
<keyword id="KW-0862">Zinc</keyword>
<keyword id="KW-0863">Zinc-finger</keyword>
<reference key="1">
    <citation type="submission" date="2004-11" db="EMBL/GenBank/DDBJ databases">
        <authorList>
            <consortium name="The German cDNA consortium"/>
        </authorList>
    </citation>
    <scope>NUCLEOTIDE SEQUENCE [LARGE SCALE MRNA]</scope>
    <source>
        <tissue>Kidney</tissue>
    </source>
</reference>
<name>Z585B_PONAB</name>
<protein>
    <recommendedName>
        <fullName>Zinc finger protein 585B</fullName>
    </recommendedName>
</protein>
<dbReference type="EMBL" id="CR858827">
    <property type="protein sequence ID" value="CAH91030.1"/>
    <property type="molecule type" value="mRNA"/>
</dbReference>
<dbReference type="RefSeq" id="NP_001125595.1">
    <property type="nucleotide sequence ID" value="NM_001132123.1"/>
</dbReference>
<dbReference type="SMR" id="Q5RB30"/>
<dbReference type="GeneID" id="100172511"/>
<dbReference type="KEGG" id="pon:100172511"/>
<dbReference type="CTD" id="92285"/>
<dbReference type="eggNOG" id="KOG1721">
    <property type="taxonomic scope" value="Eukaryota"/>
</dbReference>
<dbReference type="InParanoid" id="Q5RB30"/>
<dbReference type="OrthoDB" id="9411774at2759"/>
<dbReference type="Proteomes" id="UP000001595">
    <property type="component" value="Unplaced"/>
</dbReference>
<dbReference type="GO" id="GO:0005634">
    <property type="term" value="C:nucleus"/>
    <property type="evidence" value="ECO:0007669"/>
    <property type="project" value="UniProtKB-SubCell"/>
</dbReference>
<dbReference type="GO" id="GO:0000981">
    <property type="term" value="F:DNA-binding transcription factor activity, RNA polymerase II-specific"/>
    <property type="evidence" value="ECO:0007669"/>
    <property type="project" value="TreeGrafter"/>
</dbReference>
<dbReference type="GO" id="GO:0000977">
    <property type="term" value="F:RNA polymerase II transcription regulatory region sequence-specific DNA binding"/>
    <property type="evidence" value="ECO:0007669"/>
    <property type="project" value="TreeGrafter"/>
</dbReference>
<dbReference type="GO" id="GO:0008270">
    <property type="term" value="F:zinc ion binding"/>
    <property type="evidence" value="ECO:0007669"/>
    <property type="project" value="UniProtKB-KW"/>
</dbReference>
<dbReference type="CDD" id="cd07765">
    <property type="entry name" value="KRAB_A-box"/>
    <property type="match status" value="1"/>
</dbReference>
<dbReference type="FunFam" id="3.30.160.60:FF:000478">
    <property type="entry name" value="Zinc finger protein 133"/>
    <property type="match status" value="2"/>
</dbReference>
<dbReference type="FunFam" id="3.30.160.60:FF:000295">
    <property type="entry name" value="zinc finger protein 19"/>
    <property type="match status" value="1"/>
</dbReference>
<dbReference type="FunFam" id="3.30.160.60:FF:000622">
    <property type="entry name" value="zinc finger protein 26 isoform X3"/>
    <property type="match status" value="1"/>
</dbReference>
<dbReference type="FunFam" id="3.30.160.60:FF:000003">
    <property type="entry name" value="Zinc finger protein 3 homolog"/>
    <property type="match status" value="2"/>
</dbReference>
<dbReference type="FunFam" id="3.30.160.60:FF:001049">
    <property type="entry name" value="zinc finger protein 319"/>
    <property type="match status" value="1"/>
</dbReference>
<dbReference type="FunFam" id="3.30.160.60:FF:002343">
    <property type="entry name" value="Zinc finger protein 33A"/>
    <property type="match status" value="2"/>
</dbReference>
<dbReference type="FunFam" id="3.30.160.60:FF:002090">
    <property type="entry name" value="Zinc finger protein 473"/>
    <property type="match status" value="1"/>
</dbReference>
<dbReference type="FunFam" id="3.30.160.60:FF:000268">
    <property type="entry name" value="zinc finger protein 484 isoform X2"/>
    <property type="match status" value="2"/>
</dbReference>
<dbReference type="FunFam" id="3.30.160.60:FF:002254">
    <property type="entry name" value="Zinc finger protein 540"/>
    <property type="match status" value="1"/>
</dbReference>
<dbReference type="FunFam" id="3.30.160.60:FF:001270">
    <property type="entry name" value="zinc finger protein 583 isoform X1"/>
    <property type="match status" value="1"/>
</dbReference>
<dbReference type="FunFam" id="3.30.160.60:FF:000754">
    <property type="entry name" value="Zinc finger protein 585A"/>
    <property type="match status" value="4"/>
</dbReference>
<dbReference type="FunFam" id="3.30.160.60:FF:001377">
    <property type="entry name" value="Zinc finger protein 585A"/>
    <property type="match status" value="1"/>
</dbReference>
<dbReference type="FunFam" id="3.30.160.60:FF:001396">
    <property type="entry name" value="Zinc finger protein 585A"/>
    <property type="match status" value="1"/>
</dbReference>
<dbReference type="FunFam" id="3.30.160.60:FF:001475">
    <property type="entry name" value="Zinc finger protein 585A"/>
    <property type="match status" value="1"/>
</dbReference>
<dbReference type="FunFam" id="3.30.160.60:FF:000051">
    <property type="entry name" value="zinc finger protein 585A"/>
    <property type="match status" value="1"/>
</dbReference>
<dbReference type="Gene3D" id="6.10.140.140">
    <property type="match status" value="1"/>
</dbReference>
<dbReference type="Gene3D" id="3.30.160.60">
    <property type="entry name" value="Classic Zinc Finger"/>
    <property type="match status" value="23"/>
</dbReference>
<dbReference type="InterPro" id="IPR001909">
    <property type="entry name" value="KRAB"/>
</dbReference>
<dbReference type="InterPro" id="IPR036051">
    <property type="entry name" value="KRAB_dom_sf"/>
</dbReference>
<dbReference type="InterPro" id="IPR036236">
    <property type="entry name" value="Znf_C2H2_sf"/>
</dbReference>
<dbReference type="InterPro" id="IPR013087">
    <property type="entry name" value="Znf_C2H2_type"/>
</dbReference>
<dbReference type="PANTHER" id="PTHR24379">
    <property type="entry name" value="KRAB AND ZINC FINGER DOMAIN-CONTAINING"/>
    <property type="match status" value="1"/>
</dbReference>
<dbReference type="PANTHER" id="PTHR24379:SF122">
    <property type="entry name" value="SIMILAR TO ZINC FINGER PROTEIN 84 (HPF2)"/>
    <property type="match status" value="1"/>
</dbReference>
<dbReference type="Pfam" id="PF01352">
    <property type="entry name" value="KRAB"/>
    <property type="match status" value="1"/>
</dbReference>
<dbReference type="Pfam" id="PF00096">
    <property type="entry name" value="zf-C2H2"/>
    <property type="match status" value="20"/>
</dbReference>
<dbReference type="SMART" id="SM00349">
    <property type="entry name" value="KRAB"/>
    <property type="match status" value="1"/>
</dbReference>
<dbReference type="SMART" id="SM00355">
    <property type="entry name" value="ZnF_C2H2"/>
    <property type="match status" value="21"/>
</dbReference>
<dbReference type="SUPFAM" id="SSF57667">
    <property type="entry name" value="beta-beta-alpha zinc fingers"/>
    <property type="match status" value="12"/>
</dbReference>
<dbReference type="SUPFAM" id="SSF109640">
    <property type="entry name" value="KRAB domain (Kruppel-associated box)"/>
    <property type="match status" value="1"/>
</dbReference>
<dbReference type="PROSITE" id="PS50805">
    <property type="entry name" value="KRAB"/>
    <property type="match status" value="1"/>
</dbReference>
<dbReference type="PROSITE" id="PS00028">
    <property type="entry name" value="ZINC_FINGER_C2H2_1"/>
    <property type="match status" value="21"/>
</dbReference>
<dbReference type="PROSITE" id="PS50157">
    <property type="entry name" value="ZINC_FINGER_C2H2_2"/>
    <property type="match status" value="23"/>
</dbReference>
<gene>
    <name type="primary">ZNF585B</name>
</gene>
<organism>
    <name type="scientific">Pongo abelii</name>
    <name type="common">Sumatran orangutan</name>
    <name type="synonym">Pongo pygmaeus abelii</name>
    <dbReference type="NCBI Taxonomy" id="9601"/>
    <lineage>
        <taxon>Eukaryota</taxon>
        <taxon>Metazoa</taxon>
        <taxon>Chordata</taxon>
        <taxon>Craniata</taxon>
        <taxon>Vertebrata</taxon>
        <taxon>Euteleostomi</taxon>
        <taxon>Mammalia</taxon>
        <taxon>Eutheria</taxon>
        <taxon>Euarchontoglires</taxon>
        <taxon>Primates</taxon>
        <taxon>Haplorrhini</taxon>
        <taxon>Catarrhini</taxon>
        <taxon>Hominidae</taxon>
        <taxon>Pongo</taxon>
    </lineage>
</organism>
<comment type="function">
    <text>May be involved in transcriptional regulation.</text>
</comment>
<comment type="subcellular location">
    <subcellularLocation>
        <location evidence="4">Nucleus</location>
    </subcellularLocation>
</comment>
<comment type="similarity">
    <text evidence="4">Belongs to the krueppel C2H2-type zinc-finger protein family.</text>
</comment>